<name>NEUFC_DANRE</name>
<proteinExistence type="inferred from homology"/>
<dbReference type="EMBL" id="CR753844">
    <property type="protein sequence ID" value="CAM15241.1"/>
    <property type="molecule type" value="Genomic_DNA"/>
</dbReference>
<dbReference type="RefSeq" id="NP_001096144.1">
    <property type="nucleotide sequence ID" value="NM_001102674.1"/>
</dbReference>
<dbReference type="SMR" id="A2CES0"/>
<dbReference type="FunCoup" id="A2CES0">
    <property type="interactions" value="1572"/>
</dbReference>
<dbReference type="STRING" id="7955.ENSDARP00000080969"/>
<dbReference type="PaxDb" id="7955-ENSDARP00000080969"/>
<dbReference type="Ensembl" id="ENSDART00000086534">
    <property type="protein sequence ID" value="ENSDARP00000080969"/>
    <property type="gene ID" value="ENSDARG00000061006"/>
</dbReference>
<dbReference type="GeneID" id="795950"/>
<dbReference type="KEGG" id="dre:795950"/>
<dbReference type="AGR" id="ZFIN:ZDB-GENE-050506-83"/>
<dbReference type="CTD" id="124936"/>
<dbReference type="ZFIN" id="ZDB-GENE-050506-83">
    <property type="gene designation" value="cyb5d2"/>
</dbReference>
<dbReference type="eggNOG" id="KOG1108">
    <property type="taxonomic scope" value="Eukaryota"/>
</dbReference>
<dbReference type="HOGENOM" id="CLU_065455_2_0_1"/>
<dbReference type="InParanoid" id="A2CES0"/>
<dbReference type="OMA" id="GHKHYGP"/>
<dbReference type="OrthoDB" id="10257697at2759"/>
<dbReference type="PhylomeDB" id="A2CES0"/>
<dbReference type="TreeFam" id="TF313943"/>
<dbReference type="PRO" id="PR:A2CES0"/>
<dbReference type="Proteomes" id="UP000000437">
    <property type="component" value="Alternate scaffold 5"/>
</dbReference>
<dbReference type="Proteomes" id="UP000000437">
    <property type="component" value="Chromosome 5"/>
</dbReference>
<dbReference type="Bgee" id="ENSDARG00000061006">
    <property type="expression patterns" value="Expressed in mature ovarian follicle and 21 other cell types or tissues"/>
</dbReference>
<dbReference type="GO" id="GO:0012505">
    <property type="term" value="C:endomembrane system"/>
    <property type="evidence" value="ECO:0000318"/>
    <property type="project" value="GO_Central"/>
</dbReference>
<dbReference type="GO" id="GO:0005576">
    <property type="term" value="C:extracellular region"/>
    <property type="evidence" value="ECO:0007669"/>
    <property type="project" value="UniProtKB-SubCell"/>
</dbReference>
<dbReference type="GO" id="GO:0016020">
    <property type="term" value="C:membrane"/>
    <property type="evidence" value="ECO:0000318"/>
    <property type="project" value="GO_Central"/>
</dbReference>
<dbReference type="GO" id="GO:0007399">
    <property type="term" value="P:nervous system development"/>
    <property type="evidence" value="ECO:0007669"/>
    <property type="project" value="UniProtKB-KW"/>
</dbReference>
<dbReference type="Gene3D" id="3.10.120.10">
    <property type="entry name" value="Cytochrome b5-like heme/steroid binding domain"/>
    <property type="match status" value="1"/>
</dbReference>
<dbReference type="InterPro" id="IPR001199">
    <property type="entry name" value="Cyt_B5-like_heme/steroid-bd"/>
</dbReference>
<dbReference type="InterPro" id="IPR036400">
    <property type="entry name" value="Cyt_B5-like_heme/steroid_sf"/>
</dbReference>
<dbReference type="InterPro" id="IPR050577">
    <property type="entry name" value="MAPR/NEUFC/NENF-like"/>
</dbReference>
<dbReference type="PANTHER" id="PTHR10281">
    <property type="entry name" value="MEMBRANE-ASSOCIATED PROGESTERONE RECEPTOR COMPONENT-RELATED"/>
    <property type="match status" value="1"/>
</dbReference>
<dbReference type="PANTHER" id="PTHR10281:SF4">
    <property type="entry name" value="NEUFERRICIN"/>
    <property type="match status" value="1"/>
</dbReference>
<dbReference type="Pfam" id="PF00173">
    <property type="entry name" value="Cyt-b5"/>
    <property type="match status" value="1"/>
</dbReference>
<dbReference type="SMART" id="SM01117">
    <property type="entry name" value="Cyt-b5"/>
    <property type="match status" value="1"/>
</dbReference>
<dbReference type="SUPFAM" id="SSF55856">
    <property type="entry name" value="Cytochrome b5-like heme/steroid binding domain"/>
    <property type="match status" value="1"/>
</dbReference>
<keyword id="KW-0524">Neurogenesis</keyword>
<keyword id="KW-1185">Reference proteome</keyword>
<keyword id="KW-0964">Secreted</keyword>
<keyword id="KW-0732">Signal</keyword>
<evidence type="ECO:0000250" key="1"/>
<evidence type="ECO:0000255" key="2"/>
<evidence type="ECO:0000305" key="3"/>
<organism>
    <name type="scientific">Danio rerio</name>
    <name type="common">Zebrafish</name>
    <name type="synonym">Brachydanio rerio</name>
    <dbReference type="NCBI Taxonomy" id="7955"/>
    <lineage>
        <taxon>Eukaryota</taxon>
        <taxon>Metazoa</taxon>
        <taxon>Chordata</taxon>
        <taxon>Craniata</taxon>
        <taxon>Vertebrata</taxon>
        <taxon>Euteleostomi</taxon>
        <taxon>Actinopterygii</taxon>
        <taxon>Neopterygii</taxon>
        <taxon>Teleostei</taxon>
        <taxon>Ostariophysi</taxon>
        <taxon>Cypriniformes</taxon>
        <taxon>Danionidae</taxon>
        <taxon>Danioninae</taxon>
        <taxon>Danio</taxon>
    </lineage>
</organism>
<reference key="1">
    <citation type="journal article" date="2013" name="Nature">
        <title>The zebrafish reference genome sequence and its relationship to the human genome.</title>
        <authorList>
            <person name="Howe K."/>
            <person name="Clark M.D."/>
            <person name="Torroja C.F."/>
            <person name="Torrance J."/>
            <person name="Berthelot C."/>
            <person name="Muffato M."/>
            <person name="Collins J.E."/>
            <person name="Humphray S."/>
            <person name="McLaren K."/>
            <person name="Matthews L."/>
            <person name="McLaren S."/>
            <person name="Sealy I."/>
            <person name="Caccamo M."/>
            <person name="Churcher C."/>
            <person name="Scott C."/>
            <person name="Barrett J.C."/>
            <person name="Koch R."/>
            <person name="Rauch G.J."/>
            <person name="White S."/>
            <person name="Chow W."/>
            <person name="Kilian B."/>
            <person name="Quintais L.T."/>
            <person name="Guerra-Assuncao J.A."/>
            <person name="Zhou Y."/>
            <person name="Gu Y."/>
            <person name="Yen J."/>
            <person name="Vogel J.H."/>
            <person name="Eyre T."/>
            <person name="Redmond S."/>
            <person name="Banerjee R."/>
            <person name="Chi J."/>
            <person name="Fu B."/>
            <person name="Langley E."/>
            <person name="Maguire S.F."/>
            <person name="Laird G.K."/>
            <person name="Lloyd D."/>
            <person name="Kenyon E."/>
            <person name="Donaldson S."/>
            <person name="Sehra H."/>
            <person name="Almeida-King J."/>
            <person name="Loveland J."/>
            <person name="Trevanion S."/>
            <person name="Jones M."/>
            <person name="Quail M."/>
            <person name="Willey D."/>
            <person name="Hunt A."/>
            <person name="Burton J."/>
            <person name="Sims S."/>
            <person name="McLay K."/>
            <person name="Plumb B."/>
            <person name="Davis J."/>
            <person name="Clee C."/>
            <person name="Oliver K."/>
            <person name="Clark R."/>
            <person name="Riddle C."/>
            <person name="Elliot D."/>
            <person name="Threadgold G."/>
            <person name="Harden G."/>
            <person name="Ware D."/>
            <person name="Begum S."/>
            <person name="Mortimore B."/>
            <person name="Kerry G."/>
            <person name="Heath P."/>
            <person name="Phillimore B."/>
            <person name="Tracey A."/>
            <person name="Corby N."/>
            <person name="Dunn M."/>
            <person name="Johnson C."/>
            <person name="Wood J."/>
            <person name="Clark S."/>
            <person name="Pelan S."/>
            <person name="Griffiths G."/>
            <person name="Smith M."/>
            <person name="Glithero R."/>
            <person name="Howden P."/>
            <person name="Barker N."/>
            <person name="Lloyd C."/>
            <person name="Stevens C."/>
            <person name="Harley J."/>
            <person name="Holt K."/>
            <person name="Panagiotidis G."/>
            <person name="Lovell J."/>
            <person name="Beasley H."/>
            <person name="Henderson C."/>
            <person name="Gordon D."/>
            <person name="Auger K."/>
            <person name="Wright D."/>
            <person name="Collins J."/>
            <person name="Raisen C."/>
            <person name="Dyer L."/>
            <person name="Leung K."/>
            <person name="Robertson L."/>
            <person name="Ambridge K."/>
            <person name="Leongamornlert D."/>
            <person name="McGuire S."/>
            <person name="Gilderthorp R."/>
            <person name="Griffiths C."/>
            <person name="Manthravadi D."/>
            <person name="Nichol S."/>
            <person name="Barker G."/>
            <person name="Whitehead S."/>
            <person name="Kay M."/>
            <person name="Brown J."/>
            <person name="Murnane C."/>
            <person name="Gray E."/>
            <person name="Humphries M."/>
            <person name="Sycamore N."/>
            <person name="Barker D."/>
            <person name="Saunders D."/>
            <person name="Wallis J."/>
            <person name="Babbage A."/>
            <person name="Hammond S."/>
            <person name="Mashreghi-Mohammadi M."/>
            <person name="Barr L."/>
            <person name="Martin S."/>
            <person name="Wray P."/>
            <person name="Ellington A."/>
            <person name="Matthews N."/>
            <person name="Ellwood M."/>
            <person name="Woodmansey R."/>
            <person name="Clark G."/>
            <person name="Cooper J."/>
            <person name="Tromans A."/>
            <person name="Grafham D."/>
            <person name="Skuce C."/>
            <person name="Pandian R."/>
            <person name="Andrews R."/>
            <person name="Harrison E."/>
            <person name="Kimberley A."/>
            <person name="Garnett J."/>
            <person name="Fosker N."/>
            <person name="Hall R."/>
            <person name="Garner P."/>
            <person name="Kelly D."/>
            <person name="Bird C."/>
            <person name="Palmer S."/>
            <person name="Gehring I."/>
            <person name="Berger A."/>
            <person name="Dooley C.M."/>
            <person name="Ersan-Urun Z."/>
            <person name="Eser C."/>
            <person name="Geiger H."/>
            <person name="Geisler M."/>
            <person name="Karotki L."/>
            <person name="Kirn A."/>
            <person name="Konantz J."/>
            <person name="Konantz M."/>
            <person name="Oberlander M."/>
            <person name="Rudolph-Geiger S."/>
            <person name="Teucke M."/>
            <person name="Lanz C."/>
            <person name="Raddatz G."/>
            <person name="Osoegawa K."/>
            <person name="Zhu B."/>
            <person name="Rapp A."/>
            <person name="Widaa S."/>
            <person name="Langford C."/>
            <person name="Yang F."/>
            <person name="Schuster S.C."/>
            <person name="Carter N.P."/>
            <person name="Harrow J."/>
            <person name="Ning Z."/>
            <person name="Herrero J."/>
            <person name="Searle S.M."/>
            <person name="Enright A."/>
            <person name="Geisler R."/>
            <person name="Plasterk R.H."/>
            <person name="Lee C."/>
            <person name="Westerfield M."/>
            <person name="de Jong P.J."/>
            <person name="Zon L.I."/>
            <person name="Postlethwait J.H."/>
            <person name="Nusslein-Volhard C."/>
            <person name="Hubbard T.J."/>
            <person name="Roest Crollius H."/>
            <person name="Rogers J."/>
            <person name="Stemple D.L."/>
        </authorList>
    </citation>
    <scope>NUCLEOTIDE SEQUENCE [LARGE SCALE GENOMIC DNA]</scope>
    <source>
        <strain>Tuebingen</strain>
    </source>
</reference>
<gene>
    <name type="primary">cyb5d2</name>
    <name type="ORF">si:ch211-117m20.9</name>
</gene>
<protein>
    <recommendedName>
        <fullName>Neuferricin</fullName>
    </recommendedName>
    <alternativeName>
        <fullName>Cytochrome b5 domain-containing protein 2</fullName>
    </alternativeName>
</protein>
<feature type="signal peptide" evidence="2">
    <location>
        <begin position="1"/>
        <end position="17"/>
    </location>
</feature>
<feature type="chain" id="PRO_0000312324" description="Neuferricin">
    <location>
        <begin position="18"/>
        <end position="267"/>
    </location>
</feature>
<feature type="domain" description="Cytochrome b5 heme-binding">
    <location>
        <begin position="53"/>
        <end position="150"/>
    </location>
</feature>
<accession>A2CES0</accession>
<sequence length="267" mass="29715">MLKYLVALISMVLAVWTVPEWLTFPIYGNVVTVLESWLRQRVSEVSASSPGLLLTKEQLSLYNGGKNSKGLYLAILGQVFDVEKGRKHYGPGGGYHFFTGKDASRAFITGDFTEAGLSNDVSDFSESQIVALYDWLSFYQRDYTPVGKLIGRFYTETGQPTDALLHVEAFLSDGLKKKAQAQSEMQLYPSCNSEWSEASGGRVWCSTMSGGIHRDWVGVPRMLFTPGSGHSRCVCIRLSDPVHSENRNLREYTDCPPRAESCQIAKD</sequence>
<comment type="function">
    <text evidence="1">Heme-binding protein which promotes neuronal but not astrocyte differentiation.</text>
</comment>
<comment type="subcellular location">
    <subcellularLocation>
        <location evidence="1">Secreted</location>
    </subcellularLocation>
</comment>
<comment type="domain">
    <text evidence="1">The cytochrome b5 heme-binding domain was proven to bind heme, although it lacks the conserved iron-binding His residues at position 90 and 114.</text>
</comment>
<comment type="similarity">
    <text evidence="3">Belongs to the cytochrome b5 family. MAPR subfamily.</text>
</comment>